<organism>
    <name type="scientific">Francisella tularensis subsp. tularensis (strain WY96-3418)</name>
    <dbReference type="NCBI Taxonomy" id="418136"/>
    <lineage>
        <taxon>Bacteria</taxon>
        <taxon>Pseudomonadati</taxon>
        <taxon>Pseudomonadota</taxon>
        <taxon>Gammaproteobacteria</taxon>
        <taxon>Thiotrichales</taxon>
        <taxon>Francisellaceae</taxon>
        <taxon>Francisella</taxon>
    </lineage>
</organism>
<comment type="function">
    <text evidence="1">Catalyzes a salvage reaction resulting in the formation of AMP, that is energically less costly than de novo synthesis.</text>
</comment>
<comment type="catalytic activity">
    <reaction evidence="1">
        <text>AMP + diphosphate = 5-phospho-alpha-D-ribose 1-diphosphate + adenine</text>
        <dbReference type="Rhea" id="RHEA:16609"/>
        <dbReference type="ChEBI" id="CHEBI:16708"/>
        <dbReference type="ChEBI" id="CHEBI:33019"/>
        <dbReference type="ChEBI" id="CHEBI:58017"/>
        <dbReference type="ChEBI" id="CHEBI:456215"/>
        <dbReference type="EC" id="2.4.2.7"/>
    </reaction>
</comment>
<comment type="pathway">
    <text evidence="1">Purine metabolism; AMP biosynthesis via salvage pathway; AMP from adenine: step 1/1.</text>
</comment>
<comment type="subunit">
    <text evidence="1">Homodimer.</text>
</comment>
<comment type="subcellular location">
    <subcellularLocation>
        <location evidence="1">Cytoplasm</location>
    </subcellularLocation>
</comment>
<comment type="similarity">
    <text evidence="1">Belongs to the purine/pyrimidine phosphoribosyltransferase family.</text>
</comment>
<gene>
    <name evidence="1" type="primary">apt</name>
    <name type="ordered locus">FTW_0154</name>
</gene>
<reference key="1">
    <citation type="journal article" date="2007" name="PLoS ONE">
        <title>Complete genomic characterization of a pathogenic A.II strain of Francisella tularensis subspecies tularensis.</title>
        <authorList>
            <person name="Beckstrom-Sternberg S.M."/>
            <person name="Auerbach R.K."/>
            <person name="Godbole S."/>
            <person name="Pearson J.V."/>
            <person name="Beckstrom-Sternberg J.S."/>
            <person name="Deng Z."/>
            <person name="Munk C."/>
            <person name="Kubota K."/>
            <person name="Zhou Y."/>
            <person name="Bruce D."/>
            <person name="Noronha J."/>
            <person name="Scheuermann R.H."/>
            <person name="Wang A."/>
            <person name="Wei X."/>
            <person name="Wang J."/>
            <person name="Hao J."/>
            <person name="Wagner D.M."/>
            <person name="Brettin T.S."/>
            <person name="Brown N."/>
            <person name="Gilna P."/>
            <person name="Keim P.S."/>
        </authorList>
    </citation>
    <scope>NUCLEOTIDE SEQUENCE [LARGE SCALE GENOMIC DNA]</scope>
    <source>
        <strain>WY96-3418</strain>
    </source>
</reference>
<feature type="chain" id="PRO_1000000287" description="Adenine phosphoribosyltransferase">
    <location>
        <begin position="1"/>
        <end position="175"/>
    </location>
</feature>
<keyword id="KW-0963">Cytoplasm</keyword>
<keyword id="KW-0328">Glycosyltransferase</keyword>
<keyword id="KW-0660">Purine salvage</keyword>
<keyword id="KW-0808">Transferase</keyword>
<name>APT_FRATW</name>
<accession>A4IW38</accession>
<protein>
    <recommendedName>
        <fullName evidence="1">Adenine phosphoribosyltransferase</fullName>
        <shortName evidence="1">APRT</shortName>
        <ecNumber evidence="1">2.4.2.7</ecNumber>
    </recommendedName>
</protein>
<sequence>MNLDFIKSKIAAVPDFPKPGIMFRDITPLLADPQGLRKTAEAMAQELKNKGIQPTIVAGTESRGFIFGVALAEVLGLGFVPVRKPGKLPRATYSVKYDLEYGSDSLEIHQDAFKVTDEVLVVDDLLATGGTAKATVDLIEKTQAKVAGLIFVMELDGLSGREVLAGYNVSALIKF</sequence>
<proteinExistence type="inferred from homology"/>
<dbReference type="EC" id="2.4.2.7" evidence="1"/>
<dbReference type="EMBL" id="CP000608">
    <property type="protein sequence ID" value="ABO46140.1"/>
    <property type="molecule type" value="Genomic_DNA"/>
</dbReference>
<dbReference type="RefSeq" id="WP_003024628.1">
    <property type="nucleotide sequence ID" value="NC_009257.1"/>
</dbReference>
<dbReference type="SMR" id="A4IW38"/>
<dbReference type="KEGG" id="ftw:FTW_0154"/>
<dbReference type="HOGENOM" id="CLU_063339_3_0_6"/>
<dbReference type="UniPathway" id="UPA00588">
    <property type="reaction ID" value="UER00646"/>
</dbReference>
<dbReference type="GO" id="GO:0005737">
    <property type="term" value="C:cytoplasm"/>
    <property type="evidence" value="ECO:0007669"/>
    <property type="project" value="UniProtKB-SubCell"/>
</dbReference>
<dbReference type="GO" id="GO:0002055">
    <property type="term" value="F:adenine binding"/>
    <property type="evidence" value="ECO:0007669"/>
    <property type="project" value="TreeGrafter"/>
</dbReference>
<dbReference type="GO" id="GO:0003999">
    <property type="term" value="F:adenine phosphoribosyltransferase activity"/>
    <property type="evidence" value="ECO:0007669"/>
    <property type="project" value="UniProtKB-UniRule"/>
</dbReference>
<dbReference type="GO" id="GO:0016208">
    <property type="term" value="F:AMP binding"/>
    <property type="evidence" value="ECO:0007669"/>
    <property type="project" value="TreeGrafter"/>
</dbReference>
<dbReference type="GO" id="GO:0006168">
    <property type="term" value="P:adenine salvage"/>
    <property type="evidence" value="ECO:0007669"/>
    <property type="project" value="InterPro"/>
</dbReference>
<dbReference type="GO" id="GO:0044209">
    <property type="term" value="P:AMP salvage"/>
    <property type="evidence" value="ECO:0007669"/>
    <property type="project" value="UniProtKB-UniRule"/>
</dbReference>
<dbReference type="GO" id="GO:0006166">
    <property type="term" value="P:purine ribonucleoside salvage"/>
    <property type="evidence" value="ECO:0007669"/>
    <property type="project" value="UniProtKB-KW"/>
</dbReference>
<dbReference type="CDD" id="cd06223">
    <property type="entry name" value="PRTases_typeI"/>
    <property type="match status" value="1"/>
</dbReference>
<dbReference type="FunFam" id="3.40.50.2020:FF:000004">
    <property type="entry name" value="Adenine phosphoribosyltransferase"/>
    <property type="match status" value="1"/>
</dbReference>
<dbReference type="Gene3D" id="3.40.50.2020">
    <property type="match status" value="1"/>
</dbReference>
<dbReference type="HAMAP" id="MF_00004">
    <property type="entry name" value="Aden_phosphoribosyltr"/>
    <property type="match status" value="1"/>
</dbReference>
<dbReference type="InterPro" id="IPR005764">
    <property type="entry name" value="Ade_phspho_trans"/>
</dbReference>
<dbReference type="InterPro" id="IPR000836">
    <property type="entry name" value="PRibTrfase_dom"/>
</dbReference>
<dbReference type="InterPro" id="IPR029057">
    <property type="entry name" value="PRTase-like"/>
</dbReference>
<dbReference type="InterPro" id="IPR050054">
    <property type="entry name" value="UPRTase/APRTase"/>
</dbReference>
<dbReference type="NCBIfam" id="TIGR01090">
    <property type="entry name" value="apt"/>
    <property type="match status" value="1"/>
</dbReference>
<dbReference type="NCBIfam" id="NF002634">
    <property type="entry name" value="PRK02304.1-3"/>
    <property type="match status" value="1"/>
</dbReference>
<dbReference type="NCBIfam" id="NF002636">
    <property type="entry name" value="PRK02304.1-5"/>
    <property type="match status" value="1"/>
</dbReference>
<dbReference type="PANTHER" id="PTHR32315">
    <property type="entry name" value="ADENINE PHOSPHORIBOSYLTRANSFERASE"/>
    <property type="match status" value="1"/>
</dbReference>
<dbReference type="PANTHER" id="PTHR32315:SF3">
    <property type="entry name" value="ADENINE PHOSPHORIBOSYLTRANSFERASE"/>
    <property type="match status" value="1"/>
</dbReference>
<dbReference type="Pfam" id="PF00156">
    <property type="entry name" value="Pribosyltran"/>
    <property type="match status" value="1"/>
</dbReference>
<dbReference type="SUPFAM" id="SSF53271">
    <property type="entry name" value="PRTase-like"/>
    <property type="match status" value="1"/>
</dbReference>
<dbReference type="PROSITE" id="PS00103">
    <property type="entry name" value="PUR_PYR_PR_TRANSFER"/>
    <property type="match status" value="1"/>
</dbReference>
<evidence type="ECO:0000255" key="1">
    <source>
        <dbReference type="HAMAP-Rule" id="MF_00004"/>
    </source>
</evidence>